<name>YQHA_SHIB3</name>
<feature type="chain" id="PRO_1000096281" description="UPF0114 protein YqhA">
    <location>
        <begin position="1"/>
        <end position="164"/>
    </location>
</feature>
<feature type="transmembrane region" description="Helical" evidence="1">
    <location>
        <begin position="15"/>
        <end position="35"/>
    </location>
</feature>
<feature type="transmembrane region" description="Helical" evidence="1">
    <location>
        <begin position="53"/>
        <end position="73"/>
    </location>
</feature>
<feature type="transmembrane region" description="Helical" evidence="1">
    <location>
        <begin position="136"/>
        <end position="156"/>
    </location>
</feature>
<gene>
    <name evidence="1" type="primary">yqhA</name>
    <name type="ordered locus">SbBS512_E3431</name>
</gene>
<dbReference type="EMBL" id="CP001063">
    <property type="protein sequence ID" value="ACD08274.1"/>
    <property type="molecule type" value="Genomic_DNA"/>
</dbReference>
<dbReference type="RefSeq" id="WP_000439331.1">
    <property type="nucleotide sequence ID" value="NC_010658.1"/>
</dbReference>
<dbReference type="KEGG" id="sbc:SbBS512_E3431"/>
<dbReference type="HOGENOM" id="CLU_097887_1_1_6"/>
<dbReference type="Proteomes" id="UP000001030">
    <property type="component" value="Chromosome"/>
</dbReference>
<dbReference type="GO" id="GO:0005886">
    <property type="term" value="C:plasma membrane"/>
    <property type="evidence" value="ECO:0007669"/>
    <property type="project" value="UniProtKB-SubCell"/>
</dbReference>
<dbReference type="HAMAP" id="MF_00143">
    <property type="entry name" value="UPF0114"/>
    <property type="match status" value="1"/>
</dbReference>
<dbReference type="InterPro" id="IPR005134">
    <property type="entry name" value="UPF0114"/>
</dbReference>
<dbReference type="InterPro" id="IPR020761">
    <property type="entry name" value="UPF0114_bac"/>
</dbReference>
<dbReference type="NCBIfam" id="TIGR00645">
    <property type="entry name" value="HI0507"/>
    <property type="match status" value="1"/>
</dbReference>
<dbReference type="PANTHER" id="PTHR38596">
    <property type="entry name" value="UPF0114 PROTEIN YQHA"/>
    <property type="match status" value="1"/>
</dbReference>
<dbReference type="PANTHER" id="PTHR38596:SF1">
    <property type="entry name" value="UPF0114 PROTEIN YQHA"/>
    <property type="match status" value="1"/>
</dbReference>
<dbReference type="Pfam" id="PF03350">
    <property type="entry name" value="UPF0114"/>
    <property type="match status" value="1"/>
</dbReference>
<organism>
    <name type="scientific">Shigella boydii serotype 18 (strain CDC 3083-94 / BS512)</name>
    <dbReference type="NCBI Taxonomy" id="344609"/>
    <lineage>
        <taxon>Bacteria</taxon>
        <taxon>Pseudomonadati</taxon>
        <taxon>Pseudomonadota</taxon>
        <taxon>Gammaproteobacteria</taxon>
        <taxon>Enterobacterales</taxon>
        <taxon>Enterobacteriaceae</taxon>
        <taxon>Shigella</taxon>
    </lineage>
</organism>
<protein>
    <recommendedName>
        <fullName evidence="1">UPF0114 protein YqhA</fullName>
    </recommendedName>
</protein>
<proteinExistence type="inferred from homology"/>
<accession>B2U1A7</accession>
<reference key="1">
    <citation type="submission" date="2008-05" db="EMBL/GenBank/DDBJ databases">
        <title>Complete sequence of Shigella boydii serotype 18 strain BS512.</title>
        <authorList>
            <person name="Rasko D.A."/>
            <person name="Rosovitz M."/>
            <person name="Maurelli A.T."/>
            <person name="Myers G."/>
            <person name="Seshadri R."/>
            <person name="Cer R."/>
            <person name="Jiang L."/>
            <person name="Ravel J."/>
            <person name="Sebastian Y."/>
        </authorList>
    </citation>
    <scope>NUCLEOTIDE SEQUENCE [LARGE SCALE GENOMIC DNA]</scope>
    <source>
        <strain>CDC 3083-94 / BS512</strain>
    </source>
</reference>
<comment type="subcellular location">
    <subcellularLocation>
        <location evidence="1">Cell membrane</location>
        <topology evidence="1">Multi-pass membrane protein</topology>
    </subcellularLocation>
</comment>
<comment type="similarity">
    <text evidence="1">Belongs to the UPF0114 family.</text>
</comment>
<keyword id="KW-1003">Cell membrane</keyword>
<keyword id="KW-0472">Membrane</keyword>
<keyword id="KW-1185">Reference proteome</keyword>
<keyword id="KW-0812">Transmembrane</keyword>
<keyword id="KW-1133">Transmembrane helix</keyword>
<sequence>MERFLENAMYASRWLLAPVYFGLSLALVALALKFFQEIIHVLPNIFSMAESDLILVLLSLVDMTLVGGLLVMVMFSGYENFVSQLDISENKEKLNWLGKMDATSLKNKVAASIVAISSIHLLRVFMDAKNVPDNKLMWYVIIHLTFVLSAFVMGYLDRLTRHNH</sequence>
<evidence type="ECO:0000255" key="1">
    <source>
        <dbReference type="HAMAP-Rule" id="MF_00143"/>
    </source>
</evidence>